<gene>
    <name evidence="1" type="primary">menC</name>
    <name type="ordered locus">SPC_1405</name>
</gene>
<organism>
    <name type="scientific">Salmonella paratyphi C (strain RKS4594)</name>
    <dbReference type="NCBI Taxonomy" id="476213"/>
    <lineage>
        <taxon>Bacteria</taxon>
        <taxon>Pseudomonadati</taxon>
        <taxon>Pseudomonadota</taxon>
        <taxon>Gammaproteobacteria</taxon>
        <taxon>Enterobacterales</taxon>
        <taxon>Enterobacteriaceae</taxon>
        <taxon>Salmonella</taxon>
    </lineage>
</organism>
<sequence length="320" mass="35346">MRSAQVYRWQIPMDAGVVLRDRRLKTRDGLYVCLRDGEREGWGEISPLPGFSQETWEEAQTALLTWVNDWLQGSEGLPEMPSVAFGASCALAELTGVLPEAADYRAAPLCTGDPDDLVLRLADMPGEKIAKVKVGLYEAVRDGMVVNLLLEAIPDLHLRLDANRAWTPLKAQQFAKYVNPDYRARIAFLEEPCKTRDDSRGFARETGIAIAWDESLREADFTFEAEEGVRAVVIKPTLTGSLDKVREQVAAAHALGLTAVISSSIESSLGLTQLARIAAWLTPGTLPGLDTLHLMQAQQIRPWPGSALPCLKREELERLL</sequence>
<name>MENC_SALPC</name>
<accession>C0Q062</accession>
<dbReference type="EC" id="4.2.1.113" evidence="1"/>
<dbReference type="EMBL" id="CP000857">
    <property type="protein sequence ID" value="ACN45566.1"/>
    <property type="molecule type" value="Genomic_DNA"/>
</dbReference>
<dbReference type="RefSeq" id="WP_001255565.1">
    <property type="nucleotide sequence ID" value="NC_012125.1"/>
</dbReference>
<dbReference type="SMR" id="C0Q062"/>
<dbReference type="KEGG" id="sei:SPC_1405"/>
<dbReference type="HOGENOM" id="CLU_030273_0_1_6"/>
<dbReference type="UniPathway" id="UPA00079"/>
<dbReference type="UniPathway" id="UPA01057">
    <property type="reaction ID" value="UER00165"/>
</dbReference>
<dbReference type="Proteomes" id="UP000001599">
    <property type="component" value="Chromosome"/>
</dbReference>
<dbReference type="GO" id="GO:0000287">
    <property type="term" value="F:magnesium ion binding"/>
    <property type="evidence" value="ECO:0007669"/>
    <property type="project" value="UniProtKB-UniRule"/>
</dbReference>
<dbReference type="GO" id="GO:0043748">
    <property type="term" value="F:O-succinylbenzoate synthase activity"/>
    <property type="evidence" value="ECO:0007669"/>
    <property type="project" value="UniProtKB-EC"/>
</dbReference>
<dbReference type="GO" id="GO:0009234">
    <property type="term" value="P:menaquinone biosynthetic process"/>
    <property type="evidence" value="ECO:0007669"/>
    <property type="project" value="UniProtKB-UniRule"/>
</dbReference>
<dbReference type="CDD" id="cd03320">
    <property type="entry name" value="OSBS"/>
    <property type="match status" value="1"/>
</dbReference>
<dbReference type="FunFam" id="3.20.20.120:FF:000006">
    <property type="entry name" value="o-succinylbenzoate synthase"/>
    <property type="match status" value="1"/>
</dbReference>
<dbReference type="Gene3D" id="3.20.20.120">
    <property type="entry name" value="Enolase-like C-terminal domain"/>
    <property type="match status" value="1"/>
</dbReference>
<dbReference type="Gene3D" id="3.30.390.10">
    <property type="entry name" value="Enolase-like, N-terminal domain"/>
    <property type="match status" value="1"/>
</dbReference>
<dbReference type="HAMAP" id="MF_00470">
    <property type="entry name" value="MenC_1"/>
    <property type="match status" value="1"/>
</dbReference>
<dbReference type="InterPro" id="IPR036849">
    <property type="entry name" value="Enolase-like_C_sf"/>
</dbReference>
<dbReference type="InterPro" id="IPR029017">
    <property type="entry name" value="Enolase-like_N"/>
</dbReference>
<dbReference type="InterPro" id="IPR029065">
    <property type="entry name" value="Enolase_C-like"/>
</dbReference>
<dbReference type="InterPro" id="IPR013342">
    <property type="entry name" value="Mandelate_racemase_C"/>
</dbReference>
<dbReference type="InterPro" id="IPR010196">
    <property type="entry name" value="OSB_synthase_MenC1"/>
</dbReference>
<dbReference type="InterPro" id="IPR041338">
    <property type="entry name" value="OSBS_N"/>
</dbReference>
<dbReference type="NCBIfam" id="TIGR01927">
    <property type="entry name" value="menC_gam_Gplu"/>
    <property type="match status" value="1"/>
</dbReference>
<dbReference type="NCBIfam" id="NF003473">
    <property type="entry name" value="PRK05105.1"/>
    <property type="match status" value="1"/>
</dbReference>
<dbReference type="PANTHER" id="PTHR48073:SF2">
    <property type="entry name" value="O-SUCCINYLBENZOATE SYNTHASE"/>
    <property type="match status" value="1"/>
</dbReference>
<dbReference type="PANTHER" id="PTHR48073">
    <property type="entry name" value="O-SUCCINYLBENZOATE SYNTHASE-RELATED"/>
    <property type="match status" value="1"/>
</dbReference>
<dbReference type="Pfam" id="PF21508">
    <property type="entry name" value="MenC_N"/>
    <property type="match status" value="1"/>
</dbReference>
<dbReference type="Pfam" id="PF13378">
    <property type="entry name" value="MR_MLE_C"/>
    <property type="match status" value="1"/>
</dbReference>
<dbReference type="SFLD" id="SFLDG00180">
    <property type="entry name" value="muconate_cycloisomerase"/>
    <property type="match status" value="1"/>
</dbReference>
<dbReference type="SFLD" id="SFLDF00009">
    <property type="entry name" value="o-succinylbenzoate_synthase"/>
    <property type="match status" value="1"/>
</dbReference>
<dbReference type="SMART" id="SM00922">
    <property type="entry name" value="MR_MLE"/>
    <property type="match status" value="1"/>
</dbReference>
<dbReference type="SUPFAM" id="SSF51604">
    <property type="entry name" value="Enolase C-terminal domain-like"/>
    <property type="match status" value="1"/>
</dbReference>
<dbReference type="SUPFAM" id="SSF54826">
    <property type="entry name" value="Enolase N-terminal domain-like"/>
    <property type="match status" value="1"/>
</dbReference>
<evidence type="ECO:0000255" key="1">
    <source>
        <dbReference type="HAMAP-Rule" id="MF_00470"/>
    </source>
</evidence>
<proteinExistence type="inferred from homology"/>
<reference key="1">
    <citation type="journal article" date="2009" name="PLoS ONE">
        <title>Salmonella paratyphi C: genetic divergence from Salmonella choleraesuis and pathogenic convergence with Salmonella typhi.</title>
        <authorList>
            <person name="Liu W.-Q."/>
            <person name="Feng Y."/>
            <person name="Wang Y."/>
            <person name="Zou Q.-H."/>
            <person name="Chen F."/>
            <person name="Guo J.-T."/>
            <person name="Peng Y.-H."/>
            <person name="Jin Y."/>
            <person name="Li Y.-G."/>
            <person name="Hu S.-N."/>
            <person name="Johnston R.N."/>
            <person name="Liu G.-R."/>
            <person name="Liu S.-L."/>
        </authorList>
    </citation>
    <scope>NUCLEOTIDE SEQUENCE [LARGE SCALE GENOMIC DNA]</scope>
    <source>
        <strain>RKS4594</strain>
    </source>
</reference>
<comment type="function">
    <text evidence="1">Converts 2-succinyl-6-hydroxy-2,4-cyclohexadiene-1-carboxylate (SHCHC) to 2-succinylbenzoate (OSB).</text>
</comment>
<comment type="catalytic activity">
    <reaction evidence="1">
        <text>(1R,6R)-6-hydroxy-2-succinyl-cyclohexa-2,4-diene-1-carboxylate = 2-succinylbenzoate + H2O</text>
        <dbReference type="Rhea" id="RHEA:10196"/>
        <dbReference type="ChEBI" id="CHEBI:15377"/>
        <dbReference type="ChEBI" id="CHEBI:18325"/>
        <dbReference type="ChEBI" id="CHEBI:58689"/>
        <dbReference type="EC" id="4.2.1.113"/>
    </reaction>
</comment>
<comment type="cofactor">
    <cofactor evidence="1">
        <name>a divalent metal cation</name>
        <dbReference type="ChEBI" id="CHEBI:60240"/>
    </cofactor>
</comment>
<comment type="pathway">
    <text evidence="1">Quinol/quinone metabolism; 1,4-dihydroxy-2-naphthoate biosynthesis; 1,4-dihydroxy-2-naphthoate from chorismate: step 4/7.</text>
</comment>
<comment type="pathway">
    <text evidence="1">Quinol/quinone metabolism; menaquinone biosynthesis.</text>
</comment>
<comment type="similarity">
    <text evidence="1">Belongs to the mandelate racemase/muconate lactonizing enzyme family. MenC type 1 subfamily.</text>
</comment>
<protein>
    <recommendedName>
        <fullName evidence="1">o-succinylbenzoate synthase</fullName>
        <shortName evidence="1">OSB synthase</shortName>
        <shortName evidence="1">OSBS</shortName>
        <ecNumber evidence="1">4.2.1.113</ecNumber>
    </recommendedName>
    <alternativeName>
        <fullName evidence="1">4-(2'-carboxyphenyl)-4-oxybutyric acid synthase</fullName>
    </alternativeName>
    <alternativeName>
        <fullName evidence="1">o-succinylbenzoic acid synthase</fullName>
    </alternativeName>
</protein>
<feature type="chain" id="PRO_1000135488" description="o-succinylbenzoate synthase">
    <location>
        <begin position="1"/>
        <end position="320"/>
    </location>
</feature>
<feature type="active site" description="Proton donor" evidence="1">
    <location>
        <position position="133"/>
    </location>
</feature>
<feature type="active site" description="Proton acceptor" evidence="1">
    <location>
        <position position="235"/>
    </location>
</feature>
<feature type="binding site" evidence="1">
    <location>
        <position position="161"/>
    </location>
    <ligand>
        <name>Mg(2+)</name>
        <dbReference type="ChEBI" id="CHEBI:18420"/>
    </ligand>
</feature>
<feature type="binding site" evidence="1">
    <location>
        <position position="190"/>
    </location>
    <ligand>
        <name>Mg(2+)</name>
        <dbReference type="ChEBI" id="CHEBI:18420"/>
    </ligand>
</feature>
<feature type="binding site" evidence="1">
    <location>
        <position position="213"/>
    </location>
    <ligand>
        <name>Mg(2+)</name>
        <dbReference type="ChEBI" id="CHEBI:18420"/>
    </ligand>
</feature>
<keyword id="KW-0456">Lyase</keyword>
<keyword id="KW-0460">Magnesium</keyword>
<keyword id="KW-0474">Menaquinone biosynthesis</keyword>
<keyword id="KW-0479">Metal-binding</keyword>